<organism>
    <name type="scientific">Lycodon semicarinatus</name>
    <name type="common">Ryukyu odd-tooth snake</name>
    <name type="synonym">Eumesodon semicarinatus</name>
    <dbReference type="NCBI Taxonomy" id="56549"/>
    <lineage>
        <taxon>Eukaryota</taxon>
        <taxon>Metazoa</taxon>
        <taxon>Chordata</taxon>
        <taxon>Craniata</taxon>
        <taxon>Vertebrata</taxon>
        <taxon>Euteleostomi</taxon>
        <taxon>Lepidosauria</taxon>
        <taxon>Squamata</taxon>
        <taxon>Bifurcata</taxon>
        <taxon>Unidentata</taxon>
        <taxon>Episquamata</taxon>
        <taxon>Toxicofera</taxon>
        <taxon>Serpentes</taxon>
        <taxon>Colubroidea</taxon>
        <taxon>Colubridae</taxon>
        <taxon>Colubrinae</taxon>
        <taxon>Lycodon</taxon>
    </lineage>
</organism>
<comment type="function">
    <text evidence="1">Subunit a, of the mitochondrial membrane ATP synthase complex (F(1)F(0) ATP synthase or Complex V) that produces ATP from ADP in the presence of a proton gradient across the membrane which is generated by electron transport complexes of the respiratory chain. ATP synthase complex consist of a soluble F(1) head domain - the catalytic core - and a membrane F(1) domain - the membrane proton channel. These two domains are linked by a central stalk rotating inside the F(1) region and a stationary peripheral stalk. During catalysis, ATP synthesis in the catalytic domain of F(1) is coupled via a rotary mechanism of the central stalk subunits to proton translocation. With the subunit c (ATP5MC1), forms the proton-conducting channel in the F(0) domain, that contains two crucial half-channels (inlet and outlet) that facilitate proton movement from the mitochondrial intermembrane space (IMS) into the matrix. Protons are taken up via the inlet half-channel and released through the outlet half-channel, following a Grotthuss mechanism.</text>
</comment>
<comment type="catalytic activity">
    <reaction evidence="1">
        <text>H(+)(in) = H(+)(out)</text>
        <dbReference type="Rhea" id="RHEA:34979"/>
        <dbReference type="ChEBI" id="CHEBI:15378"/>
    </reaction>
</comment>
<comment type="subunit">
    <text evidence="1">Component of the ATP synthase complex composed at least of ATP5F1A/subunit alpha, ATP5F1B/subunit beta, ATP5MC1/subunit c (homooctomer), MT-ATP6/subunit a, MT-ATP8/subunit 8, ATP5ME/subunit e, ATP5MF/subunit f, ATP5MG/subunit g, ATP5MK/subunit k, ATP5MJ/subunit j, ATP5F1C/subunit gamma, ATP5F1D/subunit delta, ATP5F1E/subunit epsilon, ATP5PF/subunit F6, ATP5PB/subunit b, ATP5PD/subunit d, ATP5PO/subunit OSCP. ATP synthase complex consists of a soluble F(1) head domain (subunits alpha(3) and beta(3)) - the catalytic core - and a membrane F(0) domain - the membrane proton channel (subunits c, a, 8, e, f, g, k and j). These two domains are linked by a central stalk (subunits gamma, delta, and epsilon) rotating inside the F1 region and a stationary peripheral stalk (subunits F6, b, d, and OSCP). Interacts with DNAJC30; interaction is direct.</text>
</comment>
<comment type="subcellular location">
    <subcellularLocation>
        <location>Mitochondrion inner membrane</location>
        <topology>Multi-pass membrane protein</topology>
    </subcellularLocation>
</comment>
<comment type="similarity">
    <text evidence="3">Belongs to the ATPase A chain family.</text>
</comment>
<proteinExistence type="inferred from homology"/>
<keyword id="KW-0066">ATP synthesis</keyword>
<keyword id="KW-0138">CF(0)</keyword>
<keyword id="KW-0375">Hydrogen ion transport</keyword>
<keyword id="KW-0406">Ion transport</keyword>
<keyword id="KW-0472">Membrane</keyword>
<keyword id="KW-0496">Mitochondrion</keyword>
<keyword id="KW-0999">Mitochondrion inner membrane</keyword>
<keyword id="KW-0812">Transmembrane</keyword>
<keyword id="KW-1133">Transmembrane helix</keyword>
<keyword id="KW-0813">Transport</keyword>
<accession>O79551</accession>
<feature type="chain" id="PRO_0000082115" description="ATP synthase F(0) complex subunit a">
    <location>
        <begin position="1"/>
        <end position="226"/>
    </location>
</feature>
<feature type="transmembrane region" description="Helical" evidence="2">
    <location>
        <begin position="11"/>
        <end position="31"/>
    </location>
</feature>
<feature type="transmembrane region" description="Helical" evidence="2">
    <location>
        <begin position="37"/>
        <end position="54"/>
    </location>
</feature>
<feature type="transmembrane region" description="Helical" evidence="2">
    <location>
        <begin position="72"/>
        <end position="92"/>
    </location>
</feature>
<feature type="transmembrane region" description="Helical" evidence="2">
    <location>
        <begin position="98"/>
        <end position="118"/>
    </location>
</feature>
<feature type="transmembrane region" description="Helical" evidence="2">
    <location>
        <begin position="138"/>
        <end position="158"/>
    </location>
</feature>
<feature type="transmembrane region" description="Helical" evidence="2">
    <location>
        <begin position="178"/>
        <end position="198"/>
    </location>
</feature>
<feature type="transmembrane region" description="Helical" evidence="2">
    <location>
        <begin position="199"/>
        <end position="219"/>
    </location>
</feature>
<sequence length="226" mass="25158">MTMNMFEQFMSPELLMIPTALLSMLVPVLLIHHNPKLLGNRMTTAIAWLLMTIMSNMTNQLTPSGQKWCQVLTSLLLMILLSNLLGLLPYTFTSTSQLSMNMAMAIPLWMATIITGMTKKPSITLAHMLPEGSPTPLIPFMIIIETISLLMRPLALGVRLTANITAGHLLMTMVSTTTLNFITSHITLSIMTYLLLFLLCILELAVACIQAYVFVLLIILYLQENT</sequence>
<dbReference type="EMBL" id="AB008539">
    <property type="protein sequence ID" value="BAA33027.1"/>
    <property type="molecule type" value="Genomic_DNA"/>
</dbReference>
<dbReference type="PIR" id="T11093">
    <property type="entry name" value="T11093"/>
</dbReference>
<dbReference type="RefSeq" id="NP_008424.1">
    <property type="nucleotide sequence ID" value="NC_001945.1"/>
</dbReference>
<dbReference type="SMR" id="O79551"/>
<dbReference type="GeneID" id="808269"/>
<dbReference type="CTD" id="4508"/>
<dbReference type="GO" id="GO:0005743">
    <property type="term" value="C:mitochondrial inner membrane"/>
    <property type="evidence" value="ECO:0007669"/>
    <property type="project" value="UniProtKB-SubCell"/>
</dbReference>
<dbReference type="GO" id="GO:0045259">
    <property type="term" value="C:proton-transporting ATP synthase complex"/>
    <property type="evidence" value="ECO:0000250"/>
    <property type="project" value="UniProtKB"/>
</dbReference>
<dbReference type="GO" id="GO:0015252">
    <property type="term" value="F:proton channel activity"/>
    <property type="evidence" value="ECO:0000250"/>
    <property type="project" value="UniProtKB"/>
</dbReference>
<dbReference type="GO" id="GO:0046933">
    <property type="term" value="F:proton-transporting ATP synthase activity, rotational mechanism"/>
    <property type="evidence" value="ECO:0007669"/>
    <property type="project" value="TreeGrafter"/>
</dbReference>
<dbReference type="GO" id="GO:0015986">
    <property type="term" value="P:proton motive force-driven ATP synthesis"/>
    <property type="evidence" value="ECO:0000250"/>
    <property type="project" value="UniProtKB"/>
</dbReference>
<dbReference type="GO" id="GO:1902600">
    <property type="term" value="P:proton transmembrane transport"/>
    <property type="evidence" value="ECO:0000250"/>
    <property type="project" value="UniProtKB"/>
</dbReference>
<dbReference type="CDD" id="cd00310">
    <property type="entry name" value="ATP-synt_Fo_a_6"/>
    <property type="match status" value="1"/>
</dbReference>
<dbReference type="Gene3D" id="1.20.120.220">
    <property type="entry name" value="ATP synthase, F0 complex, subunit A"/>
    <property type="match status" value="1"/>
</dbReference>
<dbReference type="InterPro" id="IPR000568">
    <property type="entry name" value="ATP_synth_F0_asu"/>
</dbReference>
<dbReference type="InterPro" id="IPR023011">
    <property type="entry name" value="ATP_synth_F0_asu_AS"/>
</dbReference>
<dbReference type="InterPro" id="IPR045083">
    <property type="entry name" value="ATP_synth_F0_asu_bact/mt"/>
</dbReference>
<dbReference type="InterPro" id="IPR035908">
    <property type="entry name" value="F0_ATP_A_sf"/>
</dbReference>
<dbReference type="NCBIfam" id="TIGR01131">
    <property type="entry name" value="ATP_synt_6_or_A"/>
    <property type="match status" value="1"/>
</dbReference>
<dbReference type="PANTHER" id="PTHR11410">
    <property type="entry name" value="ATP SYNTHASE SUBUNIT A"/>
    <property type="match status" value="1"/>
</dbReference>
<dbReference type="PANTHER" id="PTHR11410:SF0">
    <property type="entry name" value="ATP SYNTHASE SUBUNIT A"/>
    <property type="match status" value="1"/>
</dbReference>
<dbReference type="Pfam" id="PF00119">
    <property type="entry name" value="ATP-synt_A"/>
    <property type="match status" value="1"/>
</dbReference>
<dbReference type="PRINTS" id="PR00123">
    <property type="entry name" value="ATPASEA"/>
</dbReference>
<dbReference type="SUPFAM" id="SSF81336">
    <property type="entry name" value="F1F0 ATP synthase subunit A"/>
    <property type="match status" value="1"/>
</dbReference>
<dbReference type="PROSITE" id="PS00449">
    <property type="entry name" value="ATPASE_A"/>
    <property type="match status" value="1"/>
</dbReference>
<geneLocation type="mitochondrion"/>
<protein>
    <recommendedName>
        <fullName evidence="1">ATP synthase F(0) complex subunit a</fullName>
    </recommendedName>
    <alternativeName>
        <fullName>F-ATPase protein 6</fullName>
    </alternativeName>
    <alternativeName>
        <fullName evidence="1">Proton-conducting channel, ATP synthase F(0) complex subunit a</fullName>
    </alternativeName>
</protein>
<name>ATP6_LYCSM</name>
<evidence type="ECO:0000250" key="1">
    <source>
        <dbReference type="UniProtKB" id="P00846"/>
    </source>
</evidence>
<evidence type="ECO:0000255" key="2"/>
<evidence type="ECO:0000305" key="3"/>
<reference key="1">
    <citation type="journal article" date="1998" name="Genetics">
        <title>The complete nucleotide sequence of a snake (Dinodon semicarinatus) mitochondrial genome with two identical control regions.</title>
        <authorList>
            <person name="Kumazawa Y."/>
            <person name="Ota H."/>
            <person name="Nishida M."/>
            <person name="Ozawa T."/>
        </authorList>
    </citation>
    <scope>NUCLEOTIDE SEQUENCE [GENOMIC DNA]</scope>
    <source>
        <tissue>Liver</tissue>
    </source>
</reference>
<gene>
    <name evidence="1" type="primary">MT-ATP6</name>
    <name type="synonym">ATP6</name>
    <name type="synonym">ATPASE6</name>
    <name type="synonym">MTATP6</name>
</gene>